<proteinExistence type="inferred from homology"/>
<gene>
    <name evidence="1" type="primary">lig</name>
    <name type="ordered locus">Mhun_2882</name>
</gene>
<feature type="chain" id="PRO_0000365261" description="DNA ligase">
    <location>
        <begin position="1"/>
        <end position="547"/>
    </location>
</feature>
<feature type="active site" description="N6-AMP-lysine intermediate" evidence="1">
    <location>
        <position position="246"/>
    </location>
</feature>
<feature type="binding site" evidence="1">
    <location>
        <position position="244"/>
    </location>
    <ligand>
        <name>ATP</name>
        <dbReference type="ChEBI" id="CHEBI:30616"/>
    </ligand>
</feature>
<feature type="binding site" evidence="1">
    <location>
        <position position="251"/>
    </location>
    <ligand>
        <name>ATP</name>
        <dbReference type="ChEBI" id="CHEBI:30616"/>
    </ligand>
</feature>
<feature type="binding site" evidence="1">
    <location>
        <position position="266"/>
    </location>
    <ligand>
        <name>ATP</name>
        <dbReference type="ChEBI" id="CHEBI:30616"/>
    </ligand>
</feature>
<feature type="binding site" evidence="1">
    <location>
        <position position="295"/>
    </location>
    <ligand>
        <name>ATP</name>
        <dbReference type="ChEBI" id="CHEBI:30616"/>
    </ligand>
</feature>
<feature type="binding site" evidence="1">
    <location>
        <position position="334"/>
    </location>
    <ligand>
        <name>ATP</name>
        <dbReference type="ChEBI" id="CHEBI:30616"/>
    </ligand>
</feature>
<feature type="binding site" evidence="1">
    <location>
        <position position="405"/>
    </location>
    <ligand>
        <name>ATP</name>
        <dbReference type="ChEBI" id="CHEBI:30616"/>
    </ligand>
</feature>
<feature type="binding site" evidence="1">
    <location>
        <position position="411"/>
    </location>
    <ligand>
        <name>ATP</name>
        <dbReference type="ChEBI" id="CHEBI:30616"/>
    </ligand>
</feature>
<accession>Q2FTH4</accession>
<organism>
    <name type="scientific">Methanospirillum hungatei JF-1 (strain ATCC 27890 / DSM 864 / NBRC 100397 / JF-1)</name>
    <dbReference type="NCBI Taxonomy" id="323259"/>
    <lineage>
        <taxon>Archaea</taxon>
        <taxon>Methanobacteriati</taxon>
        <taxon>Methanobacteriota</taxon>
        <taxon>Stenosarchaea group</taxon>
        <taxon>Methanomicrobia</taxon>
        <taxon>Methanomicrobiales</taxon>
        <taxon>Methanospirillaceae</taxon>
        <taxon>Methanospirillum</taxon>
    </lineage>
</organism>
<protein>
    <recommendedName>
        <fullName evidence="1">DNA ligase</fullName>
        <ecNumber evidence="1">6.5.1.1</ecNumber>
    </recommendedName>
    <alternativeName>
        <fullName evidence="1">Polydeoxyribonucleotide synthase [ATP]</fullName>
    </alternativeName>
</protein>
<sequence>MIFLEFAELCSRLEKISGRLETISILAETISSLSDDDLPHFCRLILGKPFPEWSGKKLGVGPNLLYEAVAYVTGRKREEVIDRLSRVGDAGAAVEELLSQKSQTSFFTVELTLADIMAALIEISGMEGGRSQKEKVRVIQRILSSASPLEGHYITAILLEDFRIGVGEGNLRDAIAQAFSVDPNLVEYANQVRNDMGEVAVLARKGEEALRSVRLVPFHPVRMMLARQGTISGVLKEGDPVAVEFKYDGARFQFHKQNKTCRMYSRRLEEVTNAMPDVVALLDEALPDDIIVDGEVIAVQGGHPMPFQTVLRRFRRKHNVAEAADAITMIPNLFDILYYNQEMLIDLPFRERRNILTQVASRYVTPQLVSDDETEIEAYYHTALDAGHEGVMLKLQGSRYTPGVRGKDWVKIKPEADTLDLVVTGAEWGEGKRAHVFGSFLLSVRDDDRLVPISRVATGFSDEQLIWLFDTLQDDIIRKDGKMVYFEPRLVFEIGYSEIQKSPNYEGGYALRFPRFIEVREDKDLKEANTAEDVEERYIQTHSSLNT</sequence>
<comment type="function">
    <text evidence="1">DNA ligase that seals nicks in double-stranded DNA during DNA replication, DNA recombination and DNA repair.</text>
</comment>
<comment type="catalytic activity">
    <reaction evidence="1">
        <text>ATP + (deoxyribonucleotide)n-3'-hydroxyl + 5'-phospho-(deoxyribonucleotide)m = (deoxyribonucleotide)n+m + AMP + diphosphate.</text>
        <dbReference type="EC" id="6.5.1.1"/>
    </reaction>
</comment>
<comment type="cofactor">
    <cofactor evidence="1">
        <name>Mg(2+)</name>
        <dbReference type="ChEBI" id="CHEBI:18420"/>
    </cofactor>
</comment>
<comment type="similarity">
    <text evidence="1">Belongs to the ATP-dependent DNA ligase family.</text>
</comment>
<name>DNLI_METHJ</name>
<dbReference type="EC" id="6.5.1.1" evidence="1"/>
<dbReference type="EMBL" id="CP000254">
    <property type="protein sequence ID" value="ABD42574.1"/>
    <property type="molecule type" value="Genomic_DNA"/>
</dbReference>
<dbReference type="RefSeq" id="WP_011449827.1">
    <property type="nucleotide sequence ID" value="NC_007796.1"/>
</dbReference>
<dbReference type="SMR" id="Q2FTH4"/>
<dbReference type="FunCoup" id="Q2FTH4">
    <property type="interactions" value="138"/>
</dbReference>
<dbReference type="STRING" id="323259.Mhun_2882"/>
<dbReference type="EnsemblBacteria" id="ABD42574">
    <property type="protein sequence ID" value="ABD42574"/>
    <property type="gene ID" value="Mhun_2882"/>
</dbReference>
<dbReference type="GeneID" id="3924177"/>
<dbReference type="KEGG" id="mhu:Mhun_2882"/>
<dbReference type="eggNOG" id="arCOG01347">
    <property type="taxonomic scope" value="Archaea"/>
</dbReference>
<dbReference type="HOGENOM" id="CLU_005138_6_0_2"/>
<dbReference type="InParanoid" id="Q2FTH4"/>
<dbReference type="OrthoDB" id="31274at2157"/>
<dbReference type="Proteomes" id="UP000001941">
    <property type="component" value="Chromosome"/>
</dbReference>
<dbReference type="GO" id="GO:0005524">
    <property type="term" value="F:ATP binding"/>
    <property type="evidence" value="ECO:0007669"/>
    <property type="project" value="UniProtKB-UniRule"/>
</dbReference>
<dbReference type="GO" id="GO:0003677">
    <property type="term" value="F:DNA binding"/>
    <property type="evidence" value="ECO:0007669"/>
    <property type="project" value="InterPro"/>
</dbReference>
<dbReference type="GO" id="GO:0003910">
    <property type="term" value="F:DNA ligase (ATP) activity"/>
    <property type="evidence" value="ECO:0007669"/>
    <property type="project" value="UniProtKB-UniRule"/>
</dbReference>
<dbReference type="GO" id="GO:0046872">
    <property type="term" value="F:metal ion binding"/>
    <property type="evidence" value="ECO:0007669"/>
    <property type="project" value="UniProtKB-KW"/>
</dbReference>
<dbReference type="GO" id="GO:0051301">
    <property type="term" value="P:cell division"/>
    <property type="evidence" value="ECO:0007669"/>
    <property type="project" value="UniProtKB-KW"/>
</dbReference>
<dbReference type="GO" id="GO:0071897">
    <property type="term" value="P:DNA biosynthetic process"/>
    <property type="evidence" value="ECO:0007669"/>
    <property type="project" value="InterPro"/>
</dbReference>
<dbReference type="GO" id="GO:0006310">
    <property type="term" value="P:DNA recombination"/>
    <property type="evidence" value="ECO:0007669"/>
    <property type="project" value="UniProtKB-UniRule"/>
</dbReference>
<dbReference type="GO" id="GO:0006281">
    <property type="term" value="P:DNA repair"/>
    <property type="evidence" value="ECO:0007669"/>
    <property type="project" value="UniProtKB-UniRule"/>
</dbReference>
<dbReference type="GO" id="GO:0006273">
    <property type="term" value="P:lagging strand elongation"/>
    <property type="evidence" value="ECO:0007669"/>
    <property type="project" value="TreeGrafter"/>
</dbReference>
<dbReference type="CDD" id="cd07901">
    <property type="entry name" value="Adenylation_DNA_ligase_Arch_LigB"/>
    <property type="match status" value="1"/>
</dbReference>
<dbReference type="CDD" id="cd07972">
    <property type="entry name" value="OBF_DNA_ligase_Arch_LigB"/>
    <property type="match status" value="1"/>
</dbReference>
<dbReference type="FunFam" id="1.10.3260.10:FF:000007">
    <property type="entry name" value="DNA ligase"/>
    <property type="match status" value="1"/>
</dbReference>
<dbReference type="Gene3D" id="1.10.3260.10">
    <property type="entry name" value="DNA ligase, ATP-dependent, N-terminal domain"/>
    <property type="match status" value="1"/>
</dbReference>
<dbReference type="Gene3D" id="3.30.470.30">
    <property type="entry name" value="DNA ligase/mRNA capping enzyme"/>
    <property type="match status" value="1"/>
</dbReference>
<dbReference type="Gene3D" id="2.40.50.140">
    <property type="entry name" value="Nucleic acid-binding proteins"/>
    <property type="match status" value="1"/>
</dbReference>
<dbReference type="HAMAP" id="MF_00407">
    <property type="entry name" value="DNA_ligase"/>
    <property type="match status" value="1"/>
</dbReference>
<dbReference type="InterPro" id="IPR050191">
    <property type="entry name" value="ATP-dep_DNA_ligase"/>
</dbReference>
<dbReference type="InterPro" id="IPR022865">
    <property type="entry name" value="DNA_ligae_ATP-dep_bac/arc"/>
</dbReference>
<dbReference type="InterPro" id="IPR000977">
    <property type="entry name" value="DNA_ligase_ATP-dep"/>
</dbReference>
<dbReference type="InterPro" id="IPR012309">
    <property type="entry name" value="DNA_ligase_ATP-dep_C"/>
</dbReference>
<dbReference type="InterPro" id="IPR012310">
    <property type="entry name" value="DNA_ligase_ATP-dep_cent"/>
</dbReference>
<dbReference type="InterPro" id="IPR016059">
    <property type="entry name" value="DNA_ligase_ATP-dep_CS"/>
</dbReference>
<dbReference type="InterPro" id="IPR012308">
    <property type="entry name" value="DNA_ligase_ATP-dep_N"/>
</dbReference>
<dbReference type="InterPro" id="IPR036599">
    <property type="entry name" value="DNA_ligase_N_sf"/>
</dbReference>
<dbReference type="InterPro" id="IPR012340">
    <property type="entry name" value="NA-bd_OB-fold"/>
</dbReference>
<dbReference type="NCBIfam" id="TIGR00574">
    <property type="entry name" value="dnl1"/>
    <property type="match status" value="1"/>
</dbReference>
<dbReference type="PANTHER" id="PTHR45674:SF7">
    <property type="entry name" value="DNA LIGASE"/>
    <property type="match status" value="1"/>
</dbReference>
<dbReference type="PANTHER" id="PTHR45674">
    <property type="entry name" value="DNA LIGASE 1/3 FAMILY MEMBER"/>
    <property type="match status" value="1"/>
</dbReference>
<dbReference type="Pfam" id="PF04679">
    <property type="entry name" value="DNA_ligase_A_C"/>
    <property type="match status" value="1"/>
</dbReference>
<dbReference type="Pfam" id="PF01068">
    <property type="entry name" value="DNA_ligase_A_M"/>
    <property type="match status" value="1"/>
</dbReference>
<dbReference type="Pfam" id="PF04675">
    <property type="entry name" value="DNA_ligase_A_N"/>
    <property type="match status" value="1"/>
</dbReference>
<dbReference type="SUPFAM" id="SSF117018">
    <property type="entry name" value="ATP-dependent DNA ligase DNA-binding domain"/>
    <property type="match status" value="1"/>
</dbReference>
<dbReference type="SUPFAM" id="SSF56091">
    <property type="entry name" value="DNA ligase/mRNA capping enzyme, catalytic domain"/>
    <property type="match status" value="1"/>
</dbReference>
<dbReference type="SUPFAM" id="SSF50249">
    <property type="entry name" value="Nucleic acid-binding proteins"/>
    <property type="match status" value="1"/>
</dbReference>
<dbReference type="PROSITE" id="PS00333">
    <property type="entry name" value="DNA_LIGASE_A2"/>
    <property type="match status" value="1"/>
</dbReference>
<dbReference type="PROSITE" id="PS50160">
    <property type="entry name" value="DNA_LIGASE_A3"/>
    <property type="match status" value="1"/>
</dbReference>
<reference key="1">
    <citation type="journal article" date="2016" name="Stand. Genomic Sci.">
        <title>Complete genome sequence of Methanospirillum hungatei type strain JF1.</title>
        <authorList>
            <person name="Gunsalus R.P."/>
            <person name="Cook L.E."/>
            <person name="Crable B."/>
            <person name="Rohlin L."/>
            <person name="McDonald E."/>
            <person name="Mouttaki H."/>
            <person name="Sieber J.R."/>
            <person name="Poweleit N."/>
            <person name="Zhou H."/>
            <person name="Lapidus A.L."/>
            <person name="Daligault H.E."/>
            <person name="Land M."/>
            <person name="Gilna P."/>
            <person name="Ivanova N."/>
            <person name="Kyrpides N."/>
            <person name="Culley D.E."/>
            <person name="McInerney M.J."/>
        </authorList>
    </citation>
    <scope>NUCLEOTIDE SEQUENCE [LARGE SCALE GENOMIC DNA]</scope>
    <source>
        <strain>ATCC 27890 / DSM 864 / NBRC 100397 / JF-1</strain>
    </source>
</reference>
<keyword id="KW-0067">ATP-binding</keyword>
<keyword id="KW-0131">Cell cycle</keyword>
<keyword id="KW-0132">Cell division</keyword>
<keyword id="KW-0227">DNA damage</keyword>
<keyword id="KW-0233">DNA recombination</keyword>
<keyword id="KW-0234">DNA repair</keyword>
<keyword id="KW-0235">DNA replication</keyword>
<keyword id="KW-0436">Ligase</keyword>
<keyword id="KW-0460">Magnesium</keyword>
<keyword id="KW-0479">Metal-binding</keyword>
<keyword id="KW-0547">Nucleotide-binding</keyword>
<keyword id="KW-1185">Reference proteome</keyword>
<evidence type="ECO:0000255" key="1">
    <source>
        <dbReference type="HAMAP-Rule" id="MF_00407"/>
    </source>
</evidence>